<gene>
    <name evidence="5" type="primary">glcA</name>
    <name type="synonym">yghK</name>
    <name type="ordered locus">b2975</name>
    <name type="ordered locus">JW2942</name>
</gene>
<dbReference type="EMBL" id="U28377">
    <property type="protein sequence ID" value="AAA69142.1"/>
    <property type="molecule type" value="Genomic_DNA"/>
</dbReference>
<dbReference type="EMBL" id="U00096">
    <property type="protein sequence ID" value="AAC76011.1"/>
    <property type="molecule type" value="Genomic_DNA"/>
</dbReference>
<dbReference type="EMBL" id="AP009048">
    <property type="protein sequence ID" value="BAE77035.1"/>
    <property type="molecule type" value="Genomic_DNA"/>
</dbReference>
<dbReference type="PIR" id="E65083">
    <property type="entry name" value="E65083"/>
</dbReference>
<dbReference type="RefSeq" id="NP_417449.1">
    <property type="nucleotide sequence ID" value="NC_000913.3"/>
</dbReference>
<dbReference type="RefSeq" id="WP_000259302.1">
    <property type="nucleotide sequence ID" value="NZ_SSUV01000003.1"/>
</dbReference>
<dbReference type="BioGRID" id="851589">
    <property type="interactions" value="1"/>
</dbReference>
<dbReference type="DIP" id="DIP-12206N"/>
<dbReference type="FunCoup" id="Q46839">
    <property type="interactions" value="50"/>
</dbReference>
<dbReference type="IntAct" id="Q46839">
    <property type="interactions" value="2"/>
</dbReference>
<dbReference type="STRING" id="511145.b2975"/>
<dbReference type="TCDB" id="2.A.14.1.2">
    <property type="family name" value="the lactate permease (lctp) family"/>
</dbReference>
<dbReference type="PaxDb" id="511145-b2975"/>
<dbReference type="EnsemblBacteria" id="AAC76011">
    <property type="protein sequence ID" value="AAC76011"/>
    <property type="gene ID" value="b2975"/>
</dbReference>
<dbReference type="GeneID" id="75173100"/>
<dbReference type="GeneID" id="947259"/>
<dbReference type="KEGG" id="ecj:JW2942"/>
<dbReference type="KEGG" id="eco:b2975"/>
<dbReference type="KEGG" id="ecoc:C3026_16275"/>
<dbReference type="PATRIC" id="fig|1411691.4.peg.3756"/>
<dbReference type="EchoBASE" id="EB2818"/>
<dbReference type="eggNOG" id="COG1620">
    <property type="taxonomic scope" value="Bacteria"/>
</dbReference>
<dbReference type="HOGENOM" id="CLU_021628_0_0_6"/>
<dbReference type="InParanoid" id="Q46839"/>
<dbReference type="OMA" id="IAYVFPF"/>
<dbReference type="OrthoDB" id="9761056at2"/>
<dbReference type="PhylomeDB" id="Q46839"/>
<dbReference type="BioCyc" id="EcoCyc:B2975-MONOMER"/>
<dbReference type="BioCyc" id="MetaCyc:B2975-MONOMER"/>
<dbReference type="PRO" id="PR:Q46839"/>
<dbReference type="Proteomes" id="UP000000625">
    <property type="component" value="Chromosome"/>
</dbReference>
<dbReference type="GO" id="GO:0005886">
    <property type="term" value="C:plasma membrane"/>
    <property type="evidence" value="ECO:0000314"/>
    <property type="project" value="EcoCyc"/>
</dbReference>
<dbReference type="GO" id="GO:0043879">
    <property type="term" value="F:glycolate transmembrane transporter activity"/>
    <property type="evidence" value="ECO:0000269"/>
    <property type="project" value="EcoCyc"/>
</dbReference>
<dbReference type="GO" id="GO:0015129">
    <property type="term" value="F:lactate transmembrane transporter activity"/>
    <property type="evidence" value="ECO:0000269"/>
    <property type="project" value="EcoCyc"/>
</dbReference>
<dbReference type="GO" id="GO:0015295">
    <property type="term" value="F:solute:proton symporter activity"/>
    <property type="evidence" value="ECO:0000314"/>
    <property type="project" value="EcoCyc"/>
</dbReference>
<dbReference type="GO" id="GO:0035873">
    <property type="term" value="P:lactate transmembrane transport"/>
    <property type="evidence" value="ECO:0000269"/>
    <property type="project" value="EcoCyc"/>
</dbReference>
<dbReference type="InterPro" id="IPR003804">
    <property type="entry name" value="Lactate_perm"/>
</dbReference>
<dbReference type="NCBIfam" id="TIGR00795">
    <property type="entry name" value="lctP"/>
    <property type="match status" value="1"/>
</dbReference>
<dbReference type="NCBIfam" id="NF007249">
    <property type="entry name" value="PRK09695.1"/>
    <property type="match status" value="1"/>
</dbReference>
<dbReference type="PANTHER" id="PTHR30003:SF0">
    <property type="entry name" value="GLYCOLATE PERMEASE GLCA-RELATED"/>
    <property type="match status" value="1"/>
</dbReference>
<dbReference type="PANTHER" id="PTHR30003">
    <property type="entry name" value="L-LACTATE PERMEASE"/>
    <property type="match status" value="1"/>
</dbReference>
<dbReference type="Pfam" id="PF02652">
    <property type="entry name" value="Lactate_perm"/>
    <property type="match status" value="1"/>
</dbReference>
<sequence length="560" mass="58920">MVTWTQMYMPMGGLGLSALVALIPIIFFFVALAVLRLKGHVAGAITLILSILIAIFAFKMPIDMAFAAAGYGFIYGLWPIAWIIVAAVFLYKLTVASGQFDIIRSSVISITDDQRLQVLLIGFSFGALLEGAAGFGAPVAITGALLVGLGFKPLYAAGLCLIANTAPVAFGALGVPILVAGQVTGIDPFHIGAMAGRQLPFLSVLVPFWLVAMMDGWKGVKETWPAALVAGGSFAVTQFFTSNYIGPELPDITSALVSIVSLALFLKVWRPKNTETAISMGQSAGAMVVNKPSSGGPVPSEYSLGQIIRAWSPFLILTVLVTIWTMKPFKALFAPGGAFYSLVINFQIPHLHQQVLKAAPIVAQPTPMDAVFKFDPLSAGGTAIFIAAIISIFILGVGIKKGIGVFAETLISLKWPILSIGMVLAFAFVTNYSGMSTTLALVLAGTGVMFPFFSPFLGWLGVFLTGSDTSSNALFGSLQSTTAQQINVSDTLLVAANTSGGVTGKMISPQSIAVACAATGMVGRESELFRYTVKHSLIFASVIGIITLLQAYVFTGMLVS</sequence>
<proteinExistence type="evidence at protein level"/>
<keyword id="KW-0997">Cell inner membrane</keyword>
<keyword id="KW-1003">Cell membrane</keyword>
<keyword id="KW-0472">Membrane</keyword>
<keyword id="KW-1185">Reference proteome</keyword>
<keyword id="KW-0769">Symport</keyword>
<keyword id="KW-0812">Transmembrane</keyword>
<keyword id="KW-1133">Transmembrane helix</keyword>
<keyword id="KW-0813">Transport</keyword>
<evidence type="ECO:0000255" key="1"/>
<evidence type="ECO:0000269" key="2">
    <source>
    </source>
</evidence>
<evidence type="ECO:0000269" key="3">
    <source>
    </source>
</evidence>
<evidence type="ECO:0000269" key="4">
    <source>
    </source>
</evidence>
<evidence type="ECO:0000303" key="5">
    <source>
    </source>
</evidence>
<evidence type="ECO:0000305" key="6"/>
<feature type="chain" id="PRO_0000210380" description="Glycolate permease GlcA">
    <location>
        <begin position="1"/>
        <end position="560"/>
    </location>
</feature>
<feature type="topological domain" description="Cytoplasmic" evidence="6">
    <location>
        <begin position="1"/>
        <end position="13"/>
    </location>
</feature>
<feature type="transmembrane region" description="Helical" evidence="1">
    <location>
        <begin position="14"/>
        <end position="34"/>
    </location>
</feature>
<feature type="topological domain" description="Periplasmic" evidence="6">
    <location>
        <begin position="35"/>
        <end position="41"/>
    </location>
</feature>
<feature type="transmembrane region" description="Helical" evidence="1">
    <location>
        <begin position="42"/>
        <end position="62"/>
    </location>
</feature>
<feature type="topological domain" description="Cytoplasmic" evidence="6">
    <location>
        <begin position="63"/>
        <end position="69"/>
    </location>
</feature>
<feature type="transmembrane region" description="Helical" evidence="1">
    <location>
        <begin position="70"/>
        <end position="90"/>
    </location>
</feature>
<feature type="topological domain" description="Periplasmic" evidence="6">
    <location>
        <begin position="91"/>
        <end position="130"/>
    </location>
</feature>
<feature type="transmembrane region" description="Helical" evidence="1">
    <location>
        <begin position="131"/>
        <end position="151"/>
    </location>
</feature>
<feature type="topological domain" description="Cytoplasmic" evidence="6">
    <location>
        <begin position="152"/>
        <end position="158"/>
    </location>
</feature>
<feature type="transmembrane region" description="Helical" evidence="1">
    <location>
        <begin position="159"/>
        <end position="179"/>
    </location>
</feature>
<feature type="topological domain" description="Periplasmic" evidence="6">
    <location>
        <begin position="180"/>
        <end position="199"/>
    </location>
</feature>
<feature type="transmembrane region" description="Helical" evidence="1">
    <location>
        <begin position="200"/>
        <end position="220"/>
    </location>
</feature>
<feature type="topological domain" description="Cytoplasmic" evidence="6">
    <location>
        <begin position="221"/>
        <end position="225"/>
    </location>
</feature>
<feature type="transmembrane region" description="Helical" evidence="1">
    <location>
        <begin position="226"/>
        <end position="246"/>
    </location>
</feature>
<feature type="topological domain" description="Periplasmic" evidence="6">
    <location>
        <begin position="247"/>
        <end position="248"/>
    </location>
</feature>
<feature type="transmembrane region" description="Helical" evidence="1">
    <location>
        <begin position="249"/>
        <end position="269"/>
    </location>
</feature>
<feature type="topological domain" description="Cytoplasmic" evidence="6">
    <location>
        <begin position="270"/>
        <end position="313"/>
    </location>
</feature>
<feature type="transmembrane region" description="Helical" evidence="1">
    <location>
        <begin position="314"/>
        <end position="334"/>
    </location>
</feature>
<feature type="topological domain" description="Periplasmic" evidence="6">
    <location>
        <begin position="335"/>
        <end position="378"/>
    </location>
</feature>
<feature type="transmembrane region" description="Helical" evidence="1">
    <location>
        <begin position="379"/>
        <end position="399"/>
    </location>
</feature>
<feature type="topological domain" description="Cytoplasmic" evidence="6">
    <location>
        <begin position="400"/>
        <end position="408"/>
    </location>
</feature>
<feature type="transmembrane region" description="Helical" evidence="1">
    <location>
        <begin position="409"/>
        <end position="429"/>
    </location>
</feature>
<feature type="topological domain" description="Periplasmic" evidence="6">
    <location>
        <begin position="430"/>
        <end position="438"/>
    </location>
</feature>
<feature type="transmembrane region" description="Helical" evidence="1">
    <location>
        <begin position="439"/>
        <end position="459"/>
    </location>
</feature>
<feature type="topological domain" description="Cytoplasmic" evidence="6">
    <location>
        <begin position="460"/>
        <end position="536"/>
    </location>
</feature>
<feature type="transmembrane region" description="Helical" evidence="1">
    <location>
        <begin position="537"/>
        <end position="557"/>
    </location>
</feature>
<feature type="topological domain" description="Periplasmic" evidence="4">
    <location>
        <begin position="558"/>
        <end position="560"/>
    </location>
</feature>
<name>GLCA_ECOLI</name>
<organism>
    <name type="scientific">Escherichia coli (strain K12)</name>
    <dbReference type="NCBI Taxonomy" id="83333"/>
    <lineage>
        <taxon>Bacteria</taxon>
        <taxon>Pseudomonadati</taxon>
        <taxon>Pseudomonadota</taxon>
        <taxon>Gammaproteobacteria</taxon>
        <taxon>Enterobacterales</taxon>
        <taxon>Enterobacteriaceae</taxon>
        <taxon>Escherichia</taxon>
    </lineage>
</organism>
<comment type="function">
    <text evidence="2 3">Uptake of glycolate across the membrane (PubMed:11283302, PubMed:11785976). Can also transport L-lactate and D-lactate (PubMed:11283302, PubMed:11785976). Seems to be driven by a proton motive force (PubMed:11785976).</text>
</comment>
<comment type="catalytic activity">
    <reaction evidence="3">
        <text>glycolate(in) + H(+)(in) = glycolate(out) + H(+)(out)</text>
        <dbReference type="Rhea" id="RHEA:29411"/>
        <dbReference type="ChEBI" id="CHEBI:15378"/>
        <dbReference type="ChEBI" id="CHEBI:29805"/>
    </reaction>
    <physiologicalReaction direction="right-to-left" evidence="3">
        <dbReference type="Rhea" id="RHEA:29413"/>
    </physiologicalReaction>
</comment>
<comment type="catalytic activity">
    <reaction evidence="3">
        <text>(S)-lactate(in) + H(+)(in) = (S)-lactate(out) + H(+)(out)</text>
        <dbReference type="Rhea" id="RHEA:29415"/>
        <dbReference type="ChEBI" id="CHEBI:15378"/>
        <dbReference type="ChEBI" id="CHEBI:16651"/>
    </reaction>
    <physiologicalReaction direction="right-to-left" evidence="3">
        <dbReference type="Rhea" id="RHEA:29417"/>
    </physiologicalReaction>
</comment>
<comment type="catalytic activity">
    <reaction evidence="3">
        <text>(R)-lactate(in) + H(+)(in) = (R)-lactate(out) + H(+)(out)</text>
        <dbReference type="Rhea" id="RHEA:71791"/>
        <dbReference type="ChEBI" id="CHEBI:15378"/>
        <dbReference type="ChEBI" id="CHEBI:16004"/>
    </reaction>
    <physiologicalReaction direction="right-to-left" evidence="3">
        <dbReference type="Rhea" id="RHEA:71793"/>
    </physiologicalReaction>
</comment>
<comment type="activity regulation">
    <text evidence="3">Inhibited by the proton ionophore carbonyl cyanide m-chlorophenylhydrazone (CCCP).</text>
</comment>
<comment type="subcellular location">
    <subcellularLocation>
        <location evidence="4">Cell inner membrane</location>
        <topology evidence="1">Multi-pass membrane protein</topology>
    </subcellularLocation>
</comment>
<comment type="induction">
    <text evidence="2">By glycolate.</text>
</comment>
<comment type="disruption phenotype">
    <text evidence="2">The glcA-lldP double mutant is unable to grow on glycolate and displays undetectable glycolate uptake when grown in the presence of glycolate.</text>
</comment>
<comment type="similarity">
    <text evidence="6">Belongs to the lactate permease family.</text>
</comment>
<accession>Q46839</accession>
<accession>Q2M9M1</accession>
<reference key="1">
    <citation type="journal article" date="1997" name="Science">
        <title>The complete genome sequence of Escherichia coli K-12.</title>
        <authorList>
            <person name="Blattner F.R."/>
            <person name="Plunkett G. III"/>
            <person name="Bloch C.A."/>
            <person name="Perna N.T."/>
            <person name="Burland V."/>
            <person name="Riley M."/>
            <person name="Collado-Vides J."/>
            <person name="Glasner J.D."/>
            <person name="Rode C.K."/>
            <person name="Mayhew G.F."/>
            <person name="Gregor J."/>
            <person name="Davis N.W."/>
            <person name="Kirkpatrick H.A."/>
            <person name="Goeden M.A."/>
            <person name="Rose D.J."/>
            <person name="Mau B."/>
            <person name="Shao Y."/>
        </authorList>
    </citation>
    <scope>NUCLEOTIDE SEQUENCE [LARGE SCALE GENOMIC DNA]</scope>
    <source>
        <strain>K12 / MG1655 / ATCC 47076</strain>
    </source>
</reference>
<reference key="2">
    <citation type="journal article" date="2006" name="Mol. Syst. Biol.">
        <title>Highly accurate genome sequences of Escherichia coli K-12 strains MG1655 and W3110.</title>
        <authorList>
            <person name="Hayashi K."/>
            <person name="Morooka N."/>
            <person name="Yamamoto Y."/>
            <person name="Fujita K."/>
            <person name="Isono K."/>
            <person name="Choi S."/>
            <person name="Ohtsubo E."/>
            <person name="Baba T."/>
            <person name="Wanner B.L."/>
            <person name="Mori H."/>
            <person name="Horiuchi T."/>
        </authorList>
    </citation>
    <scope>NUCLEOTIDE SEQUENCE [LARGE SCALE GENOMIC DNA]</scope>
    <source>
        <strain>K12 / W3110 / ATCC 27325 / DSM 5911</strain>
    </source>
</reference>
<reference key="3">
    <citation type="journal article" date="2001" name="Microbiology">
        <title>The gene yghK linked to the glc operon of Escherichia coli encodes a permease for glycolate that is structurally and functionally similar to L-lactate permease.</title>
        <authorList>
            <person name="Nunez M.F."/>
            <person name="Pellicer M.T."/>
            <person name="Badia J."/>
            <person name="Aguilar J."/>
            <person name="Baldoma L."/>
        </authorList>
    </citation>
    <scope>FUNCTION</scope>
    <scope>INDUCTION</scope>
    <scope>DISRUPTION PHENOTYPE</scope>
    <source>
        <strain>K12 / MC4100 / ATCC 35695 / DSM 6574</strain>
    </source>
</reference>
<reference key="4">
    <citation type="journal article" date="2002" name="Biochem. Biophys. Res. Commun.">
        <title>Transport of L-lactate, D-lactate, and glycolate by the LldP and GlcA membrane carriers of Escherichia coli.</title>
        <authorList>
            <person name="Nunez M.F."/>
            <person name="Kwon O."/>
            <person name="Wilson T.H."/>
            <person name="Aguilar J."/>
            <person name="Baldoma L."/>
            <person name="Lin E.C.C."/>
        </authorList>
    </citation>
    <scope>FUNCTION</scope>
    <scope>CATALYTIC ACTIVITY</scope>
    <scope>ACTIVITY REGULATION</scope>
    <source>
        <strain>K12 / MC4100 / ATCC 35695 / DSM 6574</strain>
    </source>
</reference>
<reference key="5">
    <citation type="journal article" date="2005" name="Science">
        <title>Global topology analysis of the Escherichia coli inner membrane proteome.</title>
        <authorList>
            <person name="Daley D.O."/>
            <person name="Rapp M."/>
            <person name="Granseth E."/>
            <person name="Melen K."/>
            <person name="Drew D."/>
            <person name="von Heijne G."/>
        </authorList>
    </citation>
    <scope>TOPOLOGY [LARGE SCALE ANALYSIS]</scope>
    <scope>SUBCELLULAR LOCATION</scope>
    <source>
        <strain>K12 / MG1655 / ATCC 47076</strain>
    </source>
</reference>
<protein>
    <recommendedName>
        <fullName>Glycolate permease GlcA</fullName>
    </recommendedName>
</protein>